<name>ROC2_RHIRH</name>
<evidence type="ECO:0000256" key="1">
    <source>
        <dbReference type="SAM" id="MobiDB-lite"/>
    </source>
</evidence>
<dbReference type="EC" id="3.2.1.-"/>
<dbReference type="EMBL" id="X64255">
    <property type="protein sequence ID" value="CAA45541.1"/>
    <property type="molecule type" value="Genomic_DNA"/>
</dbReference>
<dbReference type="EMBL" id="AB006689">
    <property type="protein sequence ID" value="BAA22336.1"/>
    <property type="molecule type" value="Genomic_DNA"/>
</dbReference>
<dbReference type="EMBL" id="AP002086">
    <property type="protein sequence ID" value="BAB16135.1"/>
    <property type="molecule type" value="Genomic_DNA"/>
</dbReference>
<dbReference type="PIR" id="JC2107">
    <property type="entry name" value="JC2107"/>
</dbReference>
<dbReference type="RefSeq" id="NP_066597.1">
    <property type="nucleotide sequence ID" value="NC_002575.1"/>
</dbReference>
<dbReference type="RefSeq" id="WP_010900206.1">
    <property type="nucleotide sequence ID" value="NC_002575.1"/>
</dbReference>
<dbReference type="SMR" id="P49408"/>
<dbReference type="GO" id="GO:0008422">
    <property type="term" value="F:beta-glucosidase activity"/>
    <property type="evidence" value="ECO:0007669"/>
    <property type="project" value="InterPro"/>
</dbReference>
<dbReference type="GO" id="GO:0005975">
    <property type="term" value="P:carbohydrate metabolic process"/>
    <property type="evidence" value="ECO:0007669"/>
    <property type="project" value="InterPro"/>
</dbReference>
<dbReference type="GO" id="GO:0009691">
    <property type="term" value="P:cytokinin biosynthetic process"/>
    <property type="evidence" value="ECO:0007669"/>
    <property type="project" value="UniProtKB-KW"/>
</dbReference>
<dbReference type="InterPro" id="IPR006065">
    <property type="entry name" value="Glyco_hydro_41"/>
</dbReference>
<dbReference type="InterPro" id="IPR006064">
    <property type="entry name" value="Glycosidase"/>
</dbReference>
<dbReference type="Pfam" id="PF02027">
    <property type="entry name" value="RolB_RolC"/>
    <property type="match status" value="1"/>
</dbReference>
<dbReference type="PRINTS" id="PR00746">
    <property type="entry name" value="GLHYDRLASE41"/>
</dbReference>
<keyword id="KW-0203">Cytokinin biosynthesis</keyword>
<keyword id="KW-0326">Glycosidase</keyword>
<keyword id="KW-0378">Hydrolase</keyword>
<keyword id="KW-0614">Plasmid</keyword>
<protein>
    <recommendedName>
        <fullName>Cytokinin-beta-glucosidase</fullName>
        <ecNumber>3.2.1.-</ecNumber>
    </recommendedName>
    <alternativeName>
        <fullName>ROL C protein</fullName>
    </alternativeName>
</protein>
<organism>
    <name type="scientific">Rhizobium rhizogenes</name>
    <name type="common">Agrobacterium rhizogenes</name>
    <dbReference type="NCBI Taxonomy" id="359"/>
    <lineage>
        <taxon>Bacteria</taxon>
        <taxon>Pseudomonadati</taxon>
        <taxon>Pseudomonadota</taxon>
        <taxon>Alphaproteobacteria</taxon>
        <taxon>Hyphomicrobiales</taxon>
        <taxon>Rhizobiaceae</taxon>
        <taxon>Rhizobium/Agrobacterium group</taxon>
        <taxon>Rhizobium</taxon>
    </lineage>
</organism>
<geneLocation type="plasmid">
    <name>pRi1724</name>
</geneLocation>
<comment type="function">
    <text>Hydrolyzes cytokinin glucosides thus liberating free cytokinins. Contributes to the root inducing activity.</text>
</comment>
<reference key="1">
    <citation type="journal article" date="1994" name="Plant Physiol.">
        <title>Root-inducing region of mikimopine type Ri plasmid pRi1724.</title>
        <authorList>
            <person name="Kiyokawa S."/>
            <person name="Kobayashi K."/>
            <person name="Kikuchi Y."/>
            <person name="Kamada H."/>
            <person name="Harada H."/>
        </authorList>
    </citation>
    <scope>NUCLEOTIDE SEQUENCE [GENOMIC DNA]</scope>
    <source>
        <strain>MAFF03-01724</strain>
    </source>
</reference>
<reference key="2">
    <citation type="journal article" date="1994" name="Biosci. Biotechnol. Biochem.">
        <title>Nucleotide sequence of the rol region of the mikimopine-type root-inducing plasmid pRi1724.</title>
        <authorList>
            <person name="Tanaka N."/>
            <person name="Ikeda T."/>
            <person name="Oka A."/>
        </authorList>
    </citation>
    <scope>NUCLEOTIDE SEQUENCE [GENOMIC DNA]</scope>
    <source>
        <strain>MAFF03-01724</strain>
    </source>
</reference>
<reference key="3">
    <citation type="journal article" date="2001" name="J. Mol. Biol.">
        <title>The complete nucleotide sequence of a plant root-inducing (Ri) plasmid indicates its chimeric structure and evolutionary relationship between tumor-inducing (Ti) and symbiotic (Sym) plasmids in Rhizobiaceae.</title>
        <authorList>
            <person name="Moriguchi K."/>
            <person name="Maeda Y."/>
            <person name="Satou M."/>
            <person name="Hardayani N.S.N."/>
            <person name="Kataoka M."/>
            <person name="Tanaka N."/>
            <person name="Yoshida K."/>
        </authorList>
    </citation>
    <scope>NUCLEOTIDE SEQUENCE [GENOMIC DNA]</scope>
    <source>
        <strain>MAFF03-01724</strain>
    </source>
</reference>
<accession>P49408</accession>
<accession>Q7AJP6</accession>
<sequence>MAEFDLCALFSSLKVGDVSSSDELKKHIQSASKERTPLTEPGEGQSMDIDEEGGRQDPGILYLYVDCPTMMRCFYGGSLPYNSRHGALITNLPPYQKDVSLGEVCRGLRQASGFFGYEDVIRSAYFAALSVPGYFVKLDGQMELTSTKGKSLTFDLYASNQLRLEPGALVRHGECKFGME</sequence>
<proteinExistence type="predicted"/>
<feature type="chain" id="PRO_0000097394" description="Cytokinin-beta-glucosidase">
    <location>
        <begin position="1"/>
        <end position="180"/>
    </location>
</feature>
<feature type="region of interest" description="Disordered" evidence="1">
    <location>
        <begin position="26"/>
        <end position="54"/>
    </location>
</feature>
<feature type="compositionally biased region" description="Basic and acidic residues" evidence="1">
    <location>
        <begin position="26"/>
        <end position="37"/>
    </location>
</feature>
<gene>
    <name type="primary">rolC</name>
    <name type="ORF">riorf16</name>
</gene>